<evidence type="ECO:0000250" key="1"/>
<evidence type="ECO:0000255" key="2"/>
<evidence type="ECO:0000256" key="3">
    <source>
        <dbReference type="SAM" id="MobiDB-lite"/>
    </source>
</evidence>
<evidence type="ECO:0000269" key="4">
    <source>
    </source>
</evidence>
<evidence type="ECO:0000305" key="5"/>
<protein>
    <recommendedName>
        <fullName>Transcription factor E2F8</fullName>
        <shortName>E2F-8</shortName>
    </recommendedName>
</protein>
<name>E2F8_DANRE</name>
<proteinExistence type="inferred from homology"/>
<feature type="chain" id="PRO_0000420710" description="Transcription factor E2F8">
    <location>
        <begin position="1"/>
        <end position="917"/>
    </location>
</feature>
<feature type="DNA-binding region" evidence="2">
    <location>
        <begin position="126"/>
        <end position="195"/>
    </location>
</feature>
<feature type="DNA-binding region" evidence="2">
    <location>
        <begin position="273"/>
        <end position="359"/>
    </location>
</feature>
<feature type="region of interest" description="Disordered" evidence="3">
    <location>
        <begin position="1"/>
        <end position="122"/>
    </location>
</feature>
<feature type="region of interest" description="Disordered" evidence="3">
    <location>
        <begin position="221"/>
        <end position="252"/>
    </location>
</feature>
<feature type="region of interest" description="Disordered" evidence="3">
    <location>
        <begin position="353"/>
        <end position="386"/>
    </location>
</feature>
<feature type="region of interest" description="Disordered" evidence="3">
    <location>
        <begin position="461"/>
        <end position="497"/>
    </location>
</feature>
<feature type="region of interest" description="Disordered" evidence="3">
    <location>
        <begin position="556"/>
        <end position="615"/>
    </location>
</feature>
<feature type="region of interest" description="Disordered" evidence="3">
    <location>
        <begin position="671"/>
        <end position="698"/>
    </location>
</feature>
<feature type="region of interest" description="Disordered" evidence="3">
    <location>
        <begin position="813"/>
        <end position="834"/>
    </location>
</feature>
<feature type="compositionally biased region" description="Polar residues" evidence="3">
    <location>
        <begin position="16"/>
        <end position="27"/>
    </location>
</feature>
<feature type="compositionally biased region" description="Polar residues" evidence="3">
    <location>
        <begin position="37"/>
        <end position="48"/>
    </location>
</feature>
<feature type="compositionally biased region" description="Basic and acidic residues" evidence="3">
    <location>
        <begin position="93"/>
        <end position="103"/>
    </location>
</feature>
<feature type="compositionally biased region" description="Acidic residues" evidence="3">
    <location>
        <begin position="105"/>
        <end position="117"/>
    </location>
</feature>
<feature type="compositionally biased region" description="Acidic residues" evidence="3">
    <location>
        <begin position="233"/>
        <end position="252"/>
    </location>
</feature>
<feature type="compositionally biased region" description="Polar residues" evidence="3">
    <location>
        <begin position="371"/>
        <end position="386"/>
    </location>
</feature>
<feature type="compositionally biased region" description="Low complexity" evidence="3">
    <location>
        <begin position="475"/>
        <end position="488"/>
    </location>
</feature>
<feature type="compositionally biased region" description="Low complexity" evidence="3">
    <location>
        <begin position="568"/>
        <end position="578"/>
    </location>
</feature>
<feature type="compositionally biased region" description="Polar residues" evidence="3">
    <location>
        <begin position="595"/>
        <end position="605"/>
    </location>
</feature>
<feature type="compositionally biased region" description="Polar residues" evidence="3">
    <location>
        <begin position="815"/>
        <end position="830"/>
    </location>
</feature>
<dbReference type="EMBL" id="BX890598">
    <property type="status" value="NOT_ANNOTATED_CDS"/>
    <property type="molecule type" value="Genomic_DNA"/>
</dbReference>
<dbReference type="EMBL" id="CU041375">
    <property type="status" value="NOT_ANNOTATED_CDS"/>
    <property type="molecule type" value="Genomic_DNA"/>
</dbReference>
<dbReference type="RefSeq" id="NP_001334620.1">
    <property type="nucleotide sequence ID" value="NM_001347691.1"/>
</dbReference>
<dbReference type="RefSeq" id="XP_694311.6">
    <property type="nucleotide sequence ID" value="XM_689219.8"/>
</dbReference>
<dbReference type="SMR" id="F1QZ88"/>
<dbReference type="FunCoup" id="F1QZ88">
    <property type="interactions" value="1169"/>
</dbReference>
<dbReference type="STRING" id="7955.ENSDARP00000105923"/>
<dbReference type="PaxDb" id="7955-ENSDARP00000074403"/>
<dbReference type="Ensembl" id="ENSDART00000128488">
    <property type="protein sequence ID" value="ENSDARP00000105923"/>
    <property type="gene ID" value="ENSDARG00000057323"/>
</dbReference>
<dbReference type="GeneID" id="565952"/>
<dbReference type="KEGG" id="dre:565952"/>
<dbReference type="AGR" id="ZFIN:ZDB-GENE-041111-260"/>
<dbReference type="CTD" id="79733"/>
<dbReference type="ZFIN" id="ZDB-GENE-041111-260">
    <property type="gene designation" value="e2f8"/>
</dbReference>
<dbReference type="eggNOG" id="KOG2578">
    <property type="taxonomic scope" value="Eukaryota"/>
</dbReference>
<dbReference type="HOGENOM" id="CLU_014845_2_0_1"/>
<dbReference type="InParanoid" id="F1QZ88"/>
<dbReference type="OMA" id="LEHSVEC"/>
<dbReference type="OrthoDB" id="5318at2759"/>
<dbReference type="Reactome" id="R-DRE-6804116">
    <property type="pathway name" value="TP53 Regulates Transcription of Genes Involved in G1 Cell Cycle Arrest"/>
</dbReference>
<dbReference type="PRO" id="PR:F1QZ88"/>
<dbReference type="Proteomes" id="UP000000437">
    <property type="component" value="Alternate scaffold 7"/>
</dbReference>
<dbReference type="Proteomes" id="UP000000437">
    <property type="component" value="Chromosome 7"/>
</dbReference>
<dbReference type="Bgee" id="ENSDARG00000057323">
    <property type="expression patterns" value="Expressed in testis and 32 other cell types or tissues"/>
</dbReference>
<dbReference type="ExpressionAtlas" id="F1QZ88">
    <property type="expression patterns" value="baseline and differential"/>
</dbReference>
<dbReference type="GO" id="GO:0090575">
    <property type="term" value="C:RNA polymerase II transcription regulator complex"/>
    <property type="evidence" value="ECO:0000318"/>
    <property type="project" value="GO_Central"/>
</dbReference>
<dbReference type="GO" id="GO:0003677">
    <property type="term" value="F:DNA binding"/>
    <property type="evidence" value="ECO:0000314"/>
    <property type="project" value="ZFIN"/>
</dbReference>
<dbReference type="GO" id="GO:0003700">
    <property type="term" value="F:DNA-binding transcription factor activity"/>
    <property type="evidence" value="ECO:0000315"/>
    <property type="project" value="UniProtKB"/>
</dbReference>
<dbReference type="GO" id="GO:0000981">
    <property type="term" value="F:DNA-binding transcription factor activity, RNA polymerase II-specific"/>
    <property type="evidence" value="ECO:0000318"/>
    <property type="project" value="GO_Central"/>
</dbReference>
<dbReference type="GO" id="GO:0001217">
    <property type="term" value="F:DNA-binding transcription repressor activity"/>
    <property type="evidence" value="ECO:0000250"/>
    <property type="project" value="UniProtKB"/>
</dbReference>
<dbReference type="GO" id="GO:0000978">
    <property type="term" value="F:RNA polymerase II cis-regulatory region sequence-specific DNA binding"/>
    <property type="evidence" value="ECO:0000318"/>
    <property type="project" value="GO_Central"/>
</dbReference>
<dbReference type="GO" id="GO:0033301">
    <property type="term" value="P:cell cycle comprising mitosis without cytokinesis"/>
    <property type="evidence" value="ECO:0000250"/>
    <property type="project" value="UniProtKB"/>
</dbReference>
<dbReference type="GO" id="GO:0060718">
    <property type="term" value="P:chorionic trophoblast cell differentiation"/>
    <property type="evidence" value="ECO:0000250"/>
    <property type="project" value="UniProtKB"/>
</dbReference>
<dbReference type="GO" id="GO:0070365">
    <property type="term" value="P:hepatocyte differentiation"/>
    <property type="evidence" value="ECO:0000250"/>
    <property type="project" value="UniProtKB"/>
</dbReference>
<dbReference type="GO" id="GO:0001946">
    <property type="term" value="P:lymphangiogenesis"/>
    <property type="evidence" value="ECO:0000316"/>
    <property type="project" value="ZFIN"/>
</dbReference>
<dbReference type="GO" id="GO:0008045">
    <property type="term" value="P:motor neuron axon guidance"/>
    <property type="evidence" value="ECO:0000316"/>
    <property type="project" value="ZFIN"/>
</dbReference>
<dbReference type="GO" id="GO:0032466">
    <property type="term" value="P:negative regulation of cytokinesis"/>
    <property type="evidence" value="ECO:0000250"/>
    <property type="project" value="UniProtKB"/>
</dbReference>
<dbReference type="GO" id="GO:0045892">
    <property type="term" value="P:negative regulation of DNA-templated transcription"/>
    <property type="evidence" value="ECO:0000316"/>
    <property type="project" value="ZFIN"/>
</dbReference>
<dbReference type="GO" id="GO:0000122">
    <property type="term" value="P:negative regulation of transcription by RNA polymerase II"/>
    <property type="evidence" value="ECO:0000250"/>
    <property type="project" value="UniProtKB"/>
</dbReference>
<dbReference type="GO" id="GO:0032877">
    <property type="term" value="P:positive regulation of DNA endoreduplication"/>
    <property type="evidence" value="ECO:0000250"/>
    <property type="project" value="UniProtKB"/>
</dbReference>
<dbReference type="GO" id="GO:0045944">
    <property type="term" value="P:positive regulation of transcription by RNA polymerase II"/>
    <property type="evidence" value="ECO:0000315"/>
    <property type="project" value="UniProtKB"/>
</dbReference>
<dbReference type="GO" id="GO:0006357">
    <property type="term" value="P:regulation of transcription by RNA polymerase II"/>
    <property type="evidence" value="ECO:0000318"/>
    <property type="project" value="GO_Central"/>
</dbReference>
<dbReference type="GO" id="GO:0002040">
    <property type="term" value="P:sprouting angiogenesis"/>
    <property type="evidence" value="ECO:0000315"/>
    <property type="project" value="UniProtKB"/>
</dbReference>
<dbReference type="FunFam" id="1.10.10.10:FF:000073">
    <property type="entry name" value="E2F transcription factor 8"/>
    <property type="match status" value="1"/>
</dbReference>
<dbReference type="FunFam" id="1.10.10.10:FF:000100">
    <property type="entry name" value="E2F transcription factor 8"/>
    <property type="match status" value="1"/>
</dbReference>
<dbReference type="Gene3D" id="1.10.10.10">
    <property type="entry name" value="Winged helix-like DNA-binding domain superfamily/Winged helix DNA-binding domain"/>
    <property type="match status" value="2"/>
</dbReference>
<dbReference type="InterPro" id="IPR015633">
    <property type="entry name" value="E2F"/>
</dbReference>
<dbReference type="InterPro" id="IPR003316">
    <property type="entry name" value="E2F_WHTH_DNA-bd_dom"/>
</dbReference>
<dbReference type="InterPro" id="IPR036388">
    <property type="entry name" value="WH-like_DNA-bd_sf"/>
</dbReference>
<dbReference type="InterPro" id="IPR036390">
    <property type="entry name" value="WH_DNA-bd_sf"/>
</dbReference>
<dbReference type="PANTHER" id="PTHR12081">
    <property type="entry name" value="TRANSCRIPTION FACTOR E2F"/>
    <property type="match status" value="1"/>
</dbReference>
<dbReference type="PANTHER" id="PTHR12081:SF40">
    <property type="entry name" value="TRANSCRIPTION FACTOR E2F8"/>
    <property type="match status" value="1"/>
</dbReference>
<dbReference type="Pfam" id="PF02319">
    <property type="entry name" value="E2F_TDP"/>
    <property type="match status" value="2"/>
</dbReference>
<dbReference type="SMART" id="SM01372">
    <property type="entry name" value="E2F_TDP"/>
    <property type="match status" value="2"/>
</dbReference>
<dbReference type="SUPFAM" id="SSF46785">
    <property type="entry name" value="Winged helix' DNA-binding domain"/>
    <property type="match status" value="2"/>
</dbReference>
<organism>
    <name type="scientific">Danio rerio</name>
    <name type="common">Zebrafish</name>
    <name type="synonym">Brachydanio rerio</name>
    <dbReference type="NCBI Taxonomy" id="7955"/>
    <lineage>
        <taxon>Eukaryota</taxon>
        <taxon>Metazoa</taxon>
        <taxon>Chordata</taxon>
        <taxon>Craniata</taxon>
        <taxon>Vertebrata</taxon>
        <taxon>Euteleostomi</taxon>
        <taxon>Actinopterygii</taxon>
        <taxon>Neopterygii</taxon>
        <taxon>Teleostei</taxon>
        <taxon>Ostariophysi</taxon>
        <taxon>Cypriniformes</taxon>
        <taxon>Danionidae</taxon>
        <taxon>Danioninae</taxon>
        <taxon>Danio</taxon>
    </lineage>
</organism>
<keyword id="KW-0010">Activator</keyword>
<keyword id="KW-0131">Cell cycle</keyword>
<keyword id="KW-0238">DNA-binding</keyword>
<keyword id="KW-0539">Nucleus</keyword>
<keyword id="KW-1185">Reference proteome</keyword>
<keyword id="KW-0678">Repressor</keyword>
<keyword id="KW-0804">Transcription</keyword>
<keyword id="KW-0805">Transcription regulation</keyword>
<sequence>MSSTLSEGQTLIKKSLSPSKATSTNNKGHVFVEPQTPLKNSNKASTSEAALPETLKIMGPLTTPTKVLDAPSSDPWTPTSNLKMLISAASPEIRNREKERAVDSSESENSQETEQGEEVEKLHISRKDKSLGLLCYKFLARYPNYPNPALNNGISLDDVAAELHVERRRIYDIMNVLESLNMVSRLAKNRYTWHGRVKLAQTLAVLKRAGKENRYEQLMQQIRQRSQEREEREFDLDGEEKENEEMSSFEVDGDSGLADLPGADSKAASANSRKDKSLRVMSQKFVMLFLVSSPPVVSLDVAAKILIGEDHVVDQDKNKFKTKIRRLYDIANVLSSLELIKKVHVTEDKGRKPAFKWTGPEDIPSPKDLEISTTSSAPKPLESRSSVENCAKNLFSSPGTKRGFTRHHSLVKLVKSIQDDRRKINSAPSSPIKMTGDSADSDFYTTKMAHLAAICKKHLDEQSADGRPNNAVTDSSQSSKQPESTSASNHGPPGMQIPVLPAGAISYLPTKCSPIIPLLIPQHQTGGPYAVYMHPTSLRPQPTSLAVRSMTFESPVGANAKTSPATLTSNNQTNQSSSYGKEQTSPVNLKRASGEKSSVGSPSKMQRTEPKSVSPKLCEILQARLKARRGALTSNRPSARALHLEFSKPSESQPTVQTGTASLEHSLETFLEKEEKSQTSDNEAGLTPVRQPHSQPQKLSAPFQDMVLPSGPIHTETLIPAGYLIPISQQSIVNFREPQCSNESSKASTPTYNIYHTPTAGSRPAFPQEVTPTRLPLHRIPPISPFPSHGHRLHSPSPAILNFTLQNLGLIPGSVTPNPHTPEQSSSLQSPHPGLPHQGMIFVKPMSPARALQQTSIHGQPVTLISIPQALVTTPKGGQAFQQSFFHTPVSFPTVNTTAPKKIYIPQRKLDVSPEEI</sequence>
<comment type="function">
    <text evidence="1 4">Atypical E2F transcription factor that participates in various processes such as angiogenesis and polyploidization of specialized cells. Mainly acts as a transcription repressor that binds DNA independently of DP proteins and specifically recognizes the E2 recognition site 5'-TTTC[CG]CGC-3'. Directly represses transcription of classical E2F transcription factors such as e2f1. Acts as a regulator of S-phase by recognizing and binding the E2-related site 5'-TTCCCGCC-3' and mediating repression of G1/S-regulated genes (By similarity). Acts as a promoter of sprouting angiogenesis, possibly by acting as a transcription activator and promoting expression of vegfa.</text>
</comment>
<comment type="subunit">
    <text evidence="1">Homodimer and heterodimer: mainly forms homodimers and, to a lesser extent, heterodimers with e2f7.</text>
</comment>
<comment type="subcellular location">
    <subcellularLocation>
        <location evidence="1">Nucleus</location>
    </subcellularLocation>
</comment>
<comment type="domain">
    <text evidence="1">In contrast to classical members of the E2F transcription factor, atypical members contain 2 DNA-binding domains and regulate transcription in a DP-independent manner. Both DNA-binding domains are required for DNA-binding and are proposed to form an intramolecular structure that is similar to the winged helix structure of the E2F-DP heterodimer (By similarity).</text>
</comment>
<comment type="disruption phenotype">
    <text evidence="4">Embryos lacking both e2f7 and e2f8 contain multiple intersegmental arteries that completely fail to migrate from the dorsal aorta. Gross morphology of these embryos and initial formation of main axial vessels are unaltered.</text>
</comment>
<comment type="similarity">
    <text evidence="5">Belongs to the E2F/DP family.</text>
</comment>
<reference key="1">
    <citation type="journal article" date="2013" name="Nature">
        <title>The zebrafish reference genome sequence and its relationship to the human genome.</title>
        <authorList>
            <person name="Howe K."/>
            <person name="Clark M.D."/>
            <person name="Torroja C.F."/>
            <person name="Torrance J."/>
            <person name="Berthelot C."/>
            <person name="Muffato M."/>
            <person name="Collins J.E."/>
            <person name="Humphray S."/>
            <person name="McLaren K."/>
            <person name="Matthews L."/>
            <person name="McLaren S."/>
            <person name="Sealy I."/>
            <person name="Caccamo M."/>
            <person name="Churcher C."/>
            <person name="Scott C."/>
            <person name="Barrett J.C."/>
            <person name="Koch R."/>
            <person name="Rauch G.J."/>
            <person name="White S."/>
            <person name="Chow W."/>
            <person name="Kilian B."/>
            <person name="Quintais L.T."/>
            <person name="Guerra-Assuncao J.A."/>
            <person name="Zhou Y."/>
            <person name="Gu Y."/>
            <person name="Yen J."/>
            <person name="Vogel J.H."/>
            <person name="Eyre T."/>
            <person name="Redmond S."/>
            <person name="Banerjee R."/>
            <person name="Chi J."/>
            <person name="Fu B."/>
            <person name="Langley E."/>
            <person name="Maguire S.F."/>
            <person name="Laird G.K."/>
            <person name="Lloyd D."/>
            <person name="Kenyon E."/>
            <person name="Donaldson S."/>
            <person name="Sehra H."/>
            <person name="Almeida-King J."/>
            <person name="Loveland J."/>
            <person name="Trevanion S."/>
            <person name="Jones M."/>
            <person name="Quail M."/>
            <person name="Willey D."/>
            <person name="Hunt A."/>
            <person name="Burton J."/>
            <person name="Sims S."/>
            <person name="McLay K."/>
            <person name="Plumb B."/>
            <person name="Davis J."/>
            <person name="Clee C."/>
            <person name="Oliver K."/>
            <person name="Clark R."/>
            <person name="Riddle C."/>
            <person name="Elliot D."/>
            <person name="Threadgold G."/>
            <person name="Harden G."/>
            <person name="Ware D."/>
            <person name="Begum S."/>
            <person name="Mortimore B."/>
            <person name="Kerry G."/>
            <person name="Heath P."/>
            <person name="Phillimore B."/>
            <person name="Tracey A."/>
            <person name="Corby N."/>
            <person name="Dunn M."/>
            <person name="Johnson C."/>
            <person name="Wood J."/>
            <person name="Clark S."/>
            <person name="Pelan S."/>
            <person name="Griffiths G."/>
            <person name="Smith M."/>
            <person name="Glithero R."/>
            <person name="Howden P."/>
            <person name="Barker N."/>
            <person name="Lloyd C."/>
            <person name="Stevens C."/>
            <person name="Harley J."/>
            <person name="Holt K."/>
            <person name="Panagiotidis G."/>
            <person name="Lovell J."/>
            <person name="Beasley H."/>
            <person name="Henderson C."/>
            <person name="Gordon D."/>
            <person name="Auger K."/>
            <person name="Wright D."/>
            <person name="Collins J."/>
            <person name="Raisen C."/>
            <person name="Dyer L."/>
            <person name="Leung K."/>
            <person name="Robertson L."/>
            <person name="Ambridge K."/>
            <person name="Leongamornlert D."/>
            <person name="McGuire S."/>
            <person name="Gilderthorp R."/>
            <person name="Griffiths C."/>
            <person name="Manthravadi D."/>
            <person name="Nichol S."/>
            <person name="Barker G."/>
            <person name="Whitehead S."/>
            <person name="Kay M."/>
            <person name="Brown J."/>
            <person name="Murnane C."/>
            <person name="Gray E."/>
            <person name="Humphries M."/>
            <person name="Sycamore N."/>
            <person name="Barker D."/>
            <person name="Saunders D."/>
            <person name="Wallis J."/>
            <person name="Babbage A."/>
            <person name="Hammond S."/>
            <person name="Mashreghi-Mohammadi M."/>
            <person name="Barr L."/>
            <person name="Martin S."/>
            <person name="Wray P."/>
            <person name="Ellington A."/>
            <person name="Matthews N."/>
            <person name="Ellwood M."/>
            <person name="Woodmansey R."/>
            <person name="Clark G."/>
            <person name="Cooper J."/>
            <person name="Tromans A."/>
            <person name="Grafham D."/>
            <person name="Skuce C."/>
            <person name="Pandian R."/>
            <person name="Andrews R."/>
            <person name="Harrison E."/>
            <person name="Kimberley A."/>
            <person name="Garnett J."/>
            <person name="Fosker N."/>
            <person name="Hall R."/>
            <person name="Garner P."/>
            <person name="Kelly D."/>
            <person name="Bird C."/>
            <person name="Palmer S."/>
            <person name="Gehring I."/>
            <person name="Berger A."/>
            <person name="Dooley C.M."/>
            <person name="Ersan-Urun Z."/>
            <person name="Eser C."/>
            <person name="Geiger H."/>
            <person name="Geisler M."/>
            <person name="Karotki L."/>
            <person name="Kirn A."/>
            <person name="Konantz J."/>
            <person name="Konantz M."/>
            <person name="Oberlander M."/>
            <person name="Rudolph-Geiger S."/>
            <person name="Teucke M."/>
            <person name="Lanz C."/>
            <person name="Raddatz G."/>
            <person name="Osoegawa K."/>
            <person name="Zhu B."/>
            <person name="Rapp A."/>
            <person name="Widaa S."/>
            <person name="Langford C."/>
            <person name="Yang F."/>
            <person name="Schuster S.C."/>
            <person name="Carter N.P."/>
            <person name="Harrow J."/>
            <person name="Ning Z."/>
            <person name="Herrero J."/>
            <person name="Searle S.M."/>
            <person name="Enright A."/>
            <person name="Geisler R."/>
            <person name="Plasterk R.H."/>
            <person name="Lee C."/>
            <person name="Westerfield M."/>
            <person name="de Jong P.J."/>
            <person name="Zon L.I."/>
            <person name="Postlethwait J.H."/>
            <person name="Nusslein-Volhard C."/>
            <person name="Hubbard T.J."/>
            <person name="Roest Crollius H."/>
            <person name="Rogers J."/>
            <person name="Stemple D.L."/>
        </authorList>
    </citation>
    <scope>NUCLEOTIDE SEQUENCE [LARGE SCALE GENOMIC DNA]</scope>
    <source>
        <strain>Tuebingen</strain>
    </source>
</reference>
<reference key="2">
    <citation type="journal article" date="2012" name="EMBO J.">
        <title>E2F7 and E2F8 promote angiogenesis through transcriptional activation of VEGFA in cooperation with HIF1.</title>
        <authorList>
            <person name="Weijts B.G."/>
            <person name="Bakker W.J."/>
            <person name="Cornelissen P.W."/>
            <person name="Liang K.H."/>
            <person name="Schaftenaar F.H."/>
            <person name="Westendorp B."/>
            <person name="de Wolf C.A."/>
            <person name="Paciejewska M."/>
            <person name="Scheele C.L."/>
            <person name="Kent L."/>
            <person name="Leone G."/>
            <person name="Schulte-Merker S."/>
            <person name="de Bruin A."/>
        </authorList>
    </citation>
    <scope>FUNCTION</scope>
    <scope>DISRUPTION PHENOTYPE</scope>
</reference>
<gene>
    <name type="primary">e2f8</name>
    <name type="ORF">si:ch211-215h6.2</name>
</gene>
<accession>F1QZ88</accession>